<comment type="function">
    <text evidence="1">Carrier of the growing fatty acid chain in fatty acid biosynthesis.</text>
</comment>
<comment type="pathway">
    <text evidence="1">Lipid metabolism; fatty acid biosynthesis.</text>
</comment>
<comment type="subcellular location">
    <subcellularLocation>
        <location evidence="1">Cytoplasm</location>
    </subcellularLocation>
</comment>
<comment type="PTM">
    <text evidence="1">4'-phosphopantetheine is transferred from CoA to a specific serine of apo-ACP by AcpS. This modification is essential for activity because fatty acids are bound in thioester linkage to the sulfhydryl of the prosthetic group.</text>
</comment>
<comment type="similarity">
    <text evidence="1">Belongs to the acyl carrier protein (ACP) family.</text>
</comment>
<reference key="1">
    <citation type="submission" date="2009-01" db="EMBL/GenBank/DDBJ databases">
        <title>Complete sequence of Chloroflexus sp. Y-400-fl.</title>
        <authorList>
            <consortium name="US DOE Joint Genome Institute"/>
            <person name="Lucas S."/>
            <person name="Copeland A."/>
            <person name="Lapidus A."/>
            <person name="Glavina del Rio T."/>
            <person name="Dalin E."/>
            <person name="Tice H."/>
            <person name="Bruce D."/>
            <person name="Goodwin L."/>
            <person name="Pitluck S."/>
            <person name="Sims D."/>
            <person name="Kiss H."/>
            <person name="Brettin T."/>
            <person name="Detter J.C."/>
            <person name="Han C."/>
            <person name="Larimer F."/>
            <person name="Land M."/>
            <person name="Hauser L."/>
            <person name="Kyrpides N."/>
            <person name="Ovchinnikova G."/>
            <person name="Bryant D.A."/>
            <person name="Richardson P."/>
        </authorList>
    </citation>
    <scope>NUCLEOTIDE SEQUENCE [LARGE SCALE GENOMIC DNA]</scope>
    <source>
        <strain>ATCC 29364 / DSM 637 / Y-400-fl</strain>
    </source>
</reference>
<organism>
    <name type="scientific">Chloroflexus aurantiacus (strain ATCC 29364 / DSM 637 / Y-400-fl)</name>
    <dbReference type="NCBI Taxonomy" id="480224"/>
    <lineage>
        <taxon>Bacteria</taxon>
        <taxon>Bacillati</taxon>
        <taxon>Chloroflexota</taxon>
        <taxon>Chloroflexia</taxon>
        <taxon>Chloroflexales</taxon>
        <taxon>Chloroflexineae</taxon>
        <taxon>Chloroflexaceae</taxon>
        <taxon>Chloroflexus</taxon>
    </lineage>
</organism>
<feature type="chain" id="PRO_1000164780" description="Acyl carrier protein">
    <location>
        <begin position="1"/>
        <end position="82"/>
    </location>
</feature>
<feature type="domain" description="Carrier" evidence="2">
    <location>
        <begin position="4"/>
        <end position="79"/>
    </location>
</feature>
<feature type="modified residue" description="O-(pantetheine 4'-phosphoryl)serine" evidence="2">
    <location>
        <position position="39"/>
    </location>
</feature>
<evidence type="ECO:0000255" key="1">
    <source>
        <dbReference type="HAMAP-Rule" id="MF_01217"/>
    </source>
</evidence>
<evidence type="ECO:0000255" key="2">
    <source>
        <dbReference type="PROSITE-ProRule" id="PRU00258"/>
    </source>
</evidence>
<sequence>MASPEMEERLRKIIVDQLGVEPEQVVPSASFTKDLNADSLDLVELIMSIEEEFGVEISDEEAEKIQTVADALNYLETHQSNE</sequence>
<proteinExistence type="inferred from homology"/>
<keyword id="KW-0963">Cytoplasm</keyword>
<keyword id="KW-0275">Fatty acid biosynthesis</keyword>
<keyword id="KW-0276">Fatty acid metabolism</keyword>
<keyword id="KW-0444">Lipid biosynthesis</keyword>
<keyword id="KW-0443">Lipid metabolism</keyword>
<keyword id="KW-0596">Phosphopantetheine</keyword>
<keyword id="KW-0597">Phosphoprotein</keyword>
<protein>
    <recommendedName>
        <fullName evidence="1">Acyl carrier protein</fullName>
        <shortName evidence="1">ACP</shortName>
    </recommendedName>
</protein>
<dbReference type="EMBL" id="CP001364">
    <property type="protein sequence ID" value="ACM55047.1"/>
    <property type="molecule type" value="Genomic_DNA"/>
</dbReference>
<dbReference type="SMR" id="B9LDT1"/>
<dbReference type="KEGG" id="chl:Chy400_3680"/>
<dbReference type="HOGENOM" id="CLU_108696_5_3_0"/>
<dbReference type="OrthoDB" id="9804551at2"/>
<dbReference type="UniPathway" id="UPA00094"/>
<dbReference type="GO" id="GO:0005829">
    <property type="term" value="C:cytosol"/>
    <property type="evidence" value="ECO:0007669"/>
    <property type="project" value="TreeGrafter"/>
</dbReference>
<dbReference type="GO" id="GO:0016020">
    <property type="term" value="C:membrane"/>
    <property type="evidence" value="ECO:0007669"/>
    <property type="project" value="GOC"/>
</dbReference>
<dbReference type="GO" id="GO:0000035">
    <property type="term" value="F:acyl binding"/>
    <property type="evidence" value="ECO:0007669"/>
    <property type="project" value="TreeGrafter"/>
</dbReference>
<dbReference type="GO" id="GO:0000036">
    <property type="term" value="F:acyl carrier activity"/>
    <property type="evidence" value="ECO:0007669"/>
    <property type="project" value="UniProtKB-UniRule"/>
</dbReference>
<dbReference type="GO" id="GO:0009245">
    <property type="term" value="P:lipid A biosynthetic process"/>
    <property type="evidence" value="ECO:0007669"/>
    <property type="project" value="TreeGrafter"/>
</dbReference>
<dbReference type="FunFam" id="1.10.1200.10:FF:000068">
    <property type="entry name" value="Acyl carrier protein"/>
    <property type="match status" value="1"/>
</dbReference>
<dbReference type="Gene3D" id="1.10.1200.10">
    <property type="entry name" value="ACP-like"/>
    <property type="match status" value="1"/>
</dbReference>
<dbReference type="HAMAP" id="MF_01217">
    <property type="entry name" value="Acyl_carrier"/>
    <property type="match status" value="1"/>
</dbReference>
<dbReference type="InterPro" id="IPR003231">
    <property type="entry name" value="ACP"/>
</dbReference>
<dbReference type="InterPro" id="IPR036736">
    <property type="entry name" value="ACP-like_sf"/>
</dbReference>
<dbReference type="InterPro" id="IPR009081">
    <property type="entry name" value="PP-bd_ACP"/>
</dbReference>
<dbReference type="InterPro" id="IPR006162">
    <property type="entry name" value="Ppantetheine_attach_site"/>
</dbReference>
<dbReference type="NCBIfam" id="TIGR00517">
    <property type="entry name" value="acyl_carrier"/>
    <property type="match status" value="1"/>
</dbReference>
<dbReference type="NCBIfam" id="NF002148">
    <property type="entry name" value="PRK00982.1-2"/>
    <property type="match status" value="1"/>
</dbReference>
<dbReference type="NCBIfam" id="NF002150">
    <property type="entry name" value="PRK00982.1-4"/>
    <property type="match status" value="1"/>
</dbReference>
<dbReference type="NCBIfam" id="NF002151">
    <property type="entry name" value="PRK00982.1-5"/>
    <property type="match status" value="1"/>
</dbReference>
<dbReference type="PANTHER" id="PTHR20863">
    <property type="entry name" value="ACYL CARRIER PROTEIN"/>
    <property type="match status" value="1"/>
</dbReference>
<dbReference type="PANTHER" id="PTHR20863:SF76">
    <property type="entry name" value="CARRIER DOMAIN-CONTAINING PROTEIN"/>
    <property type="match status" value="1"/>
</dbReference>
<dbReference type="Pfam" id="PF00550">
    <property type="entry name" value="PP-binding"/>
    <property type="match status" value="1"/>
</dbReference>
<dbReference type="SUPFAM" id="SSF47336">
    <property type="entry name" value="ACP-like"/>
    <property type="match status" value="1"/>
</dbReference>
<dbReference type="PROSITE" id="PS50075">
    <property type="entry name" value="CARRIER"/>
    <property type="match status" value="1"/>
</dbReference>
<dbReference type="PROSITE" id="PS00012">
    <property type="entry name" value="PHOSPHOPANTETHEINE"/>
    <property type="match status" value="1"/>
</dbReference>
<accession>B9LDT1</accession>
<gene>
    <name evidence="1" type="primary">acpP</name>
    <name type="ordered locus">Chy400_3680</name>
</gene>
<name>ACP_CHLSY</name>